<dbReference type="EC" id="2.7.1.107" evidence="1"/>
<dbReference type="EMBL" id="AE000511">
    <property type="protein sequence ID" value="AAD07752.1"/>
    <property type="molecule type" value="Genomic_DNA"/>
</dbReference>
<dbReference type="PIR" id="D64607">
    <property type="entry name" value="D64607"/>
</dbReference>
<dbReference type="RefSeq" id="NP_207494.1">
    <property type="nucleotide sequence ID" value="NC_000915.1"/>
</dbReference>
<dbReference type="RefSeq" id="WP_001279026.1">
    <property type="nucleotide sequence ID" value="NC_018939.1"/>
</dbReference>
<dbReference type="SMR" id="P56411"/>
<dbReference type="FunCoup" id="P56411">
    <property type="interactions" value="81"/>
</dbReference>
<dbReference type="STRING" id="85962.HP_0700"/>
<dbReference type="PaxDb" id="85962-C694_03610"/>
<dbReference type="EnsemblBacteria" id="AAD07752">
    <property type="protein sequence ID" value="AAD07752"/>
    <property type="gene ID" value="HP_0700"/>
</dbReference>
<dbReference type="KEGG" id="heo:C694_03610"/>
<dbReference type="KEGG" id="hpy:HP_0700"/>
<dbReference type="PATRIC" id="fig|85962.47.peg.749"/>
<dbReference type="eggNOG" id="COG0818">
    <property type="taxonomic scope" value="Bacteria"/>
</dbReference>
<dbReference type="InParanoid" id="P56411"/>
<dbReference type="OrthoDB" id="5460798at2"/>
<dbReference type="PhylomeDB" id="P56411"/>
<dbReference type="Proteomes" id="UP000000429">
    <property type="component" value="Chromosome"/>
</dbReference>
<dbReference type="GO" id="GO:0005886">
    <property type="term" value="C:plasma membrane"/>
    <property type="evidence" value="ECO:0000318"/>
    <property type="project" value="GO_Central"/>
</dbReference>
<dbReference type="GO" id="GO:0005524">
    <property type="term" value="F:ATP binding"/>
    <property type="evidence" value="ECO:0007669"/>
    <property type="project" value="UniProtKB-KW"/>
</dbReference>
<dbReference type="GO" id="GO:0004143">
    <property type="term" value="F:ATP-dependent diacylglycerol kinase activity"/>
    <property type="evidence" value="ECO:0007669"/>
    <property type="project" value="UniProtKB-EC"/>
</dbReference>
<dbReference type="GO" id="GO:0001727">
    <property type="term" value="F:lipid kinase activity"/>
    <property type="evidence" value="ECO:0000318"/>
    <property type="project" value="GO_Central"/>
</dbReference>
<dbReference type="GO" id="GO:0046872">
    <property type="term" value="F:metal ion binding"/>
    <property type="evidence" value="ECO:0007669"/>
    <property type="project" value="UniProtKB-KW"/>
</dbReference>
<dbReference type="GO" id="GO:0006654">
    <property type="term" value="P:phosphatidic acid biosynthetic process"/>
    <property type="evidence" value="ECO:0007669"/>
    <property type="project" value="InterPro"/>
</dbReference>
<dbReference type="CDD" id="cd14264">
    <property type="entry name" value="DAGK_IM"/>
    <property type="match status" value="1"/>
</dbReference>
<dbReference type="Gene3D" id="1.10.287.3610">
    <property type="match status" value="1"/>
</dbReference>
<dbReference type="InterPro" id="IPR000829">
    <property type="entry name" value="DAGK"/>
</dbReference>
<dbReference type="InterPro" id="IPR033718">
    <property type="entry name" value="DAGK_prok"/>
</dbReference>
<dbReference type="InterPro" id="IPR036945">
    <property type="entry name" value="DAGK_sf"/>
</dbReference>
<dbReference type="PANTHER" id="PTHR34299">
    <property type="entry name" value="DIACYLGLYCEROL KINASE"/>
    <property type="match status" value="1"/>
</dbReference>
<dbReference type="PANTHER" id="PTHR34299:SF1">
    <property type="entry name" value="DIACYLGLYCEROL KINASE"/>
    <property type="match status" value="1"/>
</dbReference>
<dbReference type="Pfam" id="PF01219">
    <property type="entry name" value="DAGK_prokar"/>
    <property type="match status" value="1"/>
</dbReference>
<dbReference type="PROSITE" id="PS01069">
    <property type="entry name" value="DAGK_PROKAR"/>
    <property type="match status" value="1"/>
</dbReference>
<protein>
    <recommendedName>
        <fullName evidence="1">Diacylglycerol kinase</fullName>
        <shortName evidence="1">DAGK</shortName>
        <ecNumber evidence="1">2.7.1.107</ecNumber>
    </recommendedName>
    <alternativeName>
        <fullName evidence="1">Diglyceride kinase</fullName>
        <shortName evidence="1">DGK</shortName>
    </alternativeName>
</protein>
<keyword id="KW-0067">ATP-binding</keyword>
<keyword id="KW-0997">Cell inner membrane</keyword>
<keyword id="KW-1003">Cell membrane</keyword>
<keyword id="KW-0418">Kinase</keyword>
<keyword id="KW-0444">Lipid biosynthesis</keyword>
<keyword id="KW-0443">Lipid metabolism</keyword>
<keyword id="KW-0460">Magnesium</keyword>
<keyword id="KW-0472">Membrane</keyword>
<keyword id="KW-0479">Metal-binding</keyword>
<keyword id="KW-0547">Nucleotide-binding</keyword>
<keyword id="KW-0594">Phospholipid biosynthesis</keyword>
<keyword id="KW-1208">Phospholipid metabolism</keyword>
<keyword id="KW-1185">Reference proteome</keyword>
<keyword id="KW-0808">Transferase</keyword>
<keyword id="KW-0812">Transmembrane</keyword>
<keyword id="KW-1133">Transmembrane helix</keyword>
<gene>
    <name type="primary">dgkA</name>
    <name type="ordered locus">HP_0700</name>
</gene>
<accession>P56411</accession>
<sequence length="128" mass="14527">MSDFEVPPKAKGFKRLFKALFYSKDGLKCAWIEESAFRQIVILALFCIVLASYLAKDFLEWGLLILPCFLSVVVELINSSIEKAVDFTGTEFHPLAKKAKDMASAAQLIGLIFWTLIWGRYLLALYLK</sequence>
<organism>
    <name type="scientific">Helicobacter pylori (strain ATCC 700392 / 26695)</name>
    <name type="common">Campylobacter pylori</name>
    <dbReference type="NCBI Taxonomy" id="85962"/>
    <lineage>
        <taxon>Bacteria</taxon>
        <taxon>Pseudomonadati</taxon>
        <taxon>Campylobacterota</taxon>
        <taxon>Epsilonproteobacteria</taxon>
        <taxon>Campylobacterales</taxon>
        <taxon>Helicobacteraceae</taxon>
        <taxon>Helicobacter</taxon>
    </lineage>
</organism>
<comment type="function">
    <text evidence="1">Catalyzes the ATP-dependent phosphorylation of sn-l,2-diacylglycerol (DAG) to phosphatidic acid. Involved in the recycling of diacylglycerol produced as a by-product during membrane-derived oligosaccharide (MDO) biosynthesis.</text>
</comment>
<comment type="catalytic activity">
    <reaction evidence="1">
        <text>a 1,2-diacyl-sn-glycerol + ATP = a 1,2-diacyl-sn-glycero-3-phosphate + ADP + H(+)</text>
        <dbReference type="Rhea" id="RHEA:10272"/>
        <dbReference type="ChEBI" id="CHEBI:15378"/>
        <dbReference type="ChEBI" id="CHEBI:17815"/>
        <dbReference type="ChEBI" id="CHEBI:30616"/>
        <dbReference type="ChEBI" id="CHEBI:58608"/>
        <dbReference type="ChEBI" id="CHEBI:456216"/>
        <dbReference type="EC" id="2.7.1.107"/>
    </reaction>
</comment>
<comment type="cofactor">
    <cofactor evidence="1">
        <name>Mg(2+)</name>
        <dbReference type="ChEBI" id="CHEBI:18420"/>
    </cofactor>
</comment>
<comment type="subcellular location">
    <subcellularLocation>
        <location evidence="1">Cell inner membrane</location>
        <topology evidence="1">Multi-pass membrane protein</topology>
    </subcellularLocation>
</comment>
<comment type="similarity">
    <text evidence="3">Belongs to the bacterial diacylglycerol kinase family.</text>
</comment>
<name>KDGL_HELPY</name>
<proteinExistence type="inferred from homology"/>
<evidence type="ECO:0000250" key="1">
    <source>
        <dbReference type="UniProtKB" id="P0ABN1"/>
    </source>
</evidence>
<evidence type="ECO:0000255" key="2"/>
<evidence type="ECO:0000305" key="3"/>
<reference key="1">
    <citation type="journal article" date="1997" name="Nature">
        <title>The complete genome sequence of the gastric pathogen Helicobacter pylori.</title>
        <authorList>
            <person name="Tomb J.-F."/>
            <person name="White O."/>
            <person name="Kerlavage A.R."/>
            <person name="Clayton R.A."/>
            <person name="Sutton G.G."/>
            <person name="Fleischmann R.D."/>
            <person name="Ketchum K.A."/>
            <person name="Klenk H.-P."/>
            <person name="Gill S.R."/>
            <person name="Dougherty B.A."/>
            <person name="Nelson K.E."/>
            <person name="Quackenbush J."/>
            <person name="Zhou L."/>
            <person name="Kirkness E.F."/>
            <person name="Peterson S.N."/>
            <person name="Loftus B.J."/>
            <person name="Richardson D.L."/>
            <person name="Dodson R.J."/>
            <person name="Khalak H.G."/>
            <person name="Glodek A."/>
            <person name="McKenney K."/>
            <person name="FitzGerald L.M."/>
            <person name="Lee N."/>
            <person name="Adams M.D."/>
            <person name="Hickey E.K."/>
            <person name="Berg D.E."/>
            <person name="Gocayne J.D."/>
            <person name="Utterback T.R."/>
            <person name="Peterson J.D."/>
            <person name="Kelley J.M."/>
            <person name="Cotton M.D."/>
            <person name="Weidman J.F."/>
            <person name="Fujii C."/>
            <person name="Bowman C."/>
            <person name="Watthey L."/>
            <person name="Wallin E."/>
            <person name="Hayes W.S."/>
            <person name="Borodovsky M."/>
            <person name="Karp P.D."/>
            <person name="Smith H.O."/>
            <person name="Fraser C.M."/>
            <person name="Venter J.C."/>
        </authorList>
    </citation>
    <scope>NUCLEOTIDE SEQUENCE [LARGE SCALE GENOMIC DNA]</scope>
    <source>
        <strain>ATCC 700392 / 26695</strain>
    </source>
</reference>
<feature type="chain" id="PRO_0000195264" description="Diacylglycerol kinase">
    <location>
        <begin position="1"/>
        <end position="128"/>
    </location>
</feature>
<feature type="transmembrane region" description="Helical" evidence="2">
    <location>
        <begin position="35"/>
        <end position="55"/>
    </location>
</feature>
<feature type="transmembrane region" description="Helical" evidence="2">
    <location>
        <begin position="58"/>
        <end position="78"/>
    </location>
</feature>
<feature type="transmembrane region" description="Helical" evidence="2">
    <location>
        <begin position="107"/>
        <end position="127"/>
    </location>
</feature>
<feature type="active site" description="Proton acceptor" evidence="1">
    <location>
        <position position="75"/>
    </location>
</feature>
<feature type="binding site" evidence="1">
    <location>
        <position position="34"/>
    </location>
    <ligand>
        <name>a divalent metal cation</name>
        <dbReference type="ChEBI" id="CHEBI:60240"/>
    </ligand>
</feature>
<feature type="binding site" evidence="1">
    <location>
        <position position="82"/>
    </location>
    <ligand>
        <name>a divalent metal cation</name>
        <dbReference type="ChEBI" id="CHEBI:60240"/>
    </ligand>
</feature>